<reference key="1">
    <citation type="submission" date="1998-03" db="EMBL/GenBank/DDBJ databases">
        <title>Primary structure of genes encoding light-harvesting and reaction center proteins from Chromatium vinosum.</title>
        <authorList>
            <person name="Corson G.E."/>
            <person name="Nagashima K.V."/>
            <person name="Matsuura K."/>
            <person name="Sakuragi Y."/>
            <person name="Ruwanthi W."/>
            <person name="Qin H."/>
            <person name="Allen R."/>
            <person name="Knaff D.B."/>
        </authorList>
    </citation>
    <scope>NUCLEOTIDE SEQUENCE [GENOMIC DNA]</scope>
</reference>
<reference key="2">
    <citation type="journal article" date="2011" name="Stand. Genomic Sci.">
        <title>Complete genome sequence of Allochromatium vinosum DSM 180(T).</title>
        <authorList>
            <person name="Weissgerber T."/>
            <person name="Zigann R."/>
            <person name="Bruce D."/>
            <person name="Chang Y.J."/>
            <person name="Detter J.C."/>
            <person name="Han C."/>
            <person name="Hauser L."/>
            <person name="Jeffries C.D."/>
            <person name="Land M."/>
            <person name="Munk A.C."/>
            <person name="Tapia R."/>
            <person name="Dahl C."/>
        </authorList>
    </citation>
    <scope>NUCLEOTIDE SEQUENCE [LARGE SCALE GENOMIC DNA]</scope>
    <source>
        <strain>ATCC 17899 / DSM 180 / NBRC 103801 / NCIMB 10441 / D</strain>
    </source>
</reference>
<comment type="function">
    <text evidence="2">The reaction center of purple bacteria contains a tightly bound cytochrome molecule which re-reduces the photo oxidized primary electron donor.</text>
</comment>
<comment type="subunit">
    <text evidence="1">Component of the photosynthetic reaction center composed of protein subunits L (PufL), M (PufM), H (PuhA) and cytochrome C (PufC). The reaction center interacts with light-harvesting antenna complex LH1.</text>
</comment>
<comment type="subcellular location">
    <subcellularLocation>
        <location evidence="1">Cellular chromatophore membrane</location>
        <topology evidence="3">Lipid-anchor</topology>
    </subcellularLocation>
</comment>
<comment type="PTM">
    <text evidence="2">Binds 4 heme groups per subunit.</text>
</comment>
<accession>O82947</accession>
<accession>D3RP71</accession>
<protein>
    <recommendedName>
        <fullName>Photosynthetic reaction center cytochrome c subunit</fullName>
    </recommendedName>
</protein>
<organism>
    <name type="scientific">Allochromatium vinosum (strain ATCC 17899 / DSM 180 / NBRC 103801 / NCIMB 10441 / D)</name>
    <name type="common">Chromatium vinosum</name>
    <dbReference type="NCBI Taxonomy" id="572477"/>
    <lineage>
        <taxon>Bacteria</taxon>
        <taxon>Pseudomonadati</taxon>
        <taxon>Pseudomonadota</taxon>
        <taxon>Gammaproteobacteria</taxon>
        <taxon>Chromatiales</taxon>
        <taxon>Chromatiaceae</taxon>
        <taxon>Allochromatium</taxon>
    </lineage>
</organism>
<keyword id="KW-0002">3D-structure</keyword>
<keyword id="KW-0249">Electron transport</keyword>
<keyword id="KW-0349">Heme</keyword>
<keyword id="KW-0408">Iron</keyword>
<keyword id="KW-0449">Lipoprotein</keyword>
<keyword id="KW-0472">Membrane</keyword>
<keyword id="KW-0479">Metal-binding</keyword>
<keyword id="KW-0564">Palmitate</keyword>
<keyword id="KW-0602">Photosynthesis</keyword>
<keyword id="KW-0674">Reaction center</keyword>
<keyword id="KW-1185">Reference proteome</keyword>
<keyword id="KW-0677">Repeat</keyword>
<keyword id="KW-0732">Signal</keyword>
<keyword id="KW-0813">Transport</keyword>
<evidence type="ECO:0000250" key="1">
    <source>
        <dbReference type="UniProtKB" id="D2Z0P5"/>
    </source>
</evidence>
<evidence type="ECO:0000250" key="2">
    <source>
        <dbReference type="UniProtKB" id="P07173"/>
    </source>
</evidence>
<evidence type="ECO:0000255" key="3">
    <source>
        <dbReference type="PROSITE-ProRule" id="PRU00303"/>
    </source>
</evidence>
<evidence type="ECO:0000256" key="4">
    <source>
        <dbReference type="SAM" id="MobiDB-lite"/>
    </source>
</evidence>
<evidence type="ECO:0000305" key="5"/>
<evidence type="ECO:0007829" key="6">
    <source>
        <dbReference type="PDB" id="8WDU"/>
    </source>
</evidence>
<evidence type="ECO:0007829" key="7">
    <source>
        <dbReference type="PDB" id="8WDV"/>
    </source>
</evidence>
<dbReference type="EMBL" id="AB011811">
    <property type="protein sequence ID" value="BAA32742.1"/>
    <property type="molecule type" value="Genomic_DNA"/>
</dbReference>
<dbReference type="EMBL" id="CP001896">
    <property type="protein sequence ID" value="ADC63461.1"/>
    <property type="molecule type" value="Genomic_DNA"/>
</dbReference>
<dbReference type="RefSeq" id="WP_012971730.1">
    <property type="nucleotide sequence ID" value="NC_013851.1"/>
</dbReference>
<dbReference type="PDB" id="8WDU">
    <property type="method" value="EM"/>
    <property type="resolution" value="2.24 A"/>
    <property type="chains" value="C=1-383"/>
</dbReference>
<dbReference type="PDB" id="8WDV">
    <property type="method" value="EM"/>
    <property type="resolution" value="2.24 A"/>
    <property type="chains" value="C=1-383"/>
</dbReference>
<dbReference type="PDBsum" id="8WDU"/>
<dbReference type="PDBsum" id="8WDV"/>
<dbReference type="EMDB" id="EMD-37465"/>
<dbReference type="EMDB" id="EMD-37466"/>
<dbReference type="SMR" id="O82947"/>
<dbReference type="STRING" id="572477.Alvin_2551"/>
<dbReference type="KEGG" id="alv:Alvin_2551"/>
<dbReference type="eggNOG" id="ENOG502Z7SF">
    <property type="taxonomic scope" value="Bacteria"/>
</dbReference>
<dbReference type="HOGENOM" id="CLU_050380_0_0_6"/>
<dbReference type="OrthoDB" id="9813732at2"/>
<dbReference type="Proteomes" id="UP000001441">
    <property type="component" value="Chromosome"/>
</dbReference>
<dbReference type="GO" id="GO:0030077">
    <property type="term" value="C:plasma membrane light-harvesting complex"/>
    <property type="evidence" value="ECO:0007669"/>
    <property type="project" value="InterPro"/>
</dbReference>
<dbReference type="GO" id="GO:0042717">
    <property type="term" value="C:plasma membrane-derived chromatophore membrane"/>
    <property type="evidence" value="ECO:0007669"/>
    <property type="project" value="UniProtKB-SubCell"/>
</dbReference>
<dbReference type="GO" id="GO:0009055">
    <property type="term" value="F:electron transfer activity"/>
    <property type="evidence" value="ECO:0007669"/>
    <property type="project" value="InterPro"/>
</dbReference>
<dbReference type="GO" id="GO:0020037">
    <property type="term" value="F:heme binding"/>
    <property type="evidence" value="ECO:0007669"/>
    <property type="project" value="InterPro"/>
</dbReference>
<dbReference type="GO" id="GO:0005506">
    <property type="term" value="F:iron ion binding"/>
    <property type="evidence" value="ECO:0007669"/>
    <property type="project" value="InterPro"/>
</dbReference>
<dbReference type="GO" id="GO:0019684">
    <property type="term" value="P:photosynthesis, light reaction"/>
    <property type="evidence" value="ECO:0007669"/>
    <property type="project" value="InterPro"/>
</dbReference>
<dbReference type="CDD" id="cd09224">
    <property type="entry name" value="CytoC_RC"/>
    <property type="match status" value="1"/>
</dbReference>
<dbReference type="Gene3D" id="1.10.468.10">
    <property type="entry name" value="Photosynthetic Reaction Center, subunit C, domain 2"/>
    <property type="match status" value="2"/>
</dbReference>
<dbReference type="InterPro" id="IPR023119">
    <property type="entry name" value="Multihaem_cyt_PRC_cyt_su-like"/>
</dbReference>
<dbReference type="InterPro" id="IPR036280">
    <property type="entry name" value="Multihaem_cyt_sf"/>
</dbReference>
<dbReference type="InterPro" id="IPR003158">
    <property type="entry name" value="Photosyn_RC_cyt_c-su"/>
</dbReference>
<dbReference type="NCBIfam" id="NF040706">
    <property type="entry name" value="photo_cyt_PufC"/>
    <property type="match status" value="1"/>
</dbReference>
<dbReference type="Pfam" id="PF02276">
    <property type="entry name" value="CytoC_RC"/>
    <property type="match status" value="1"/>
</dbReference>
<dbReference type="PIRSF" id="PIRSF000017">
    <property type="entry name" value="RC_cytochrome"/>
    <property type="match status" value="1"/>
</dbReference>
<dbReference type="SUPFAM" id="SSF48695">
    <property type="entry name" value="Multiheme cytochromes"/>
    <property type="match status" value="1"/>
</dbReference>
<dbReference type="PROSITE" id="PS51008">
    <property type="entry name" value="MULTIHEME_CYTC"/>
    <property type="match status" value="1"/>
</dbReference>
<dbReference type="PROSITE" id="PS51257">
    <property type="entry name" value="PROKAR_LIPOPROTEIN"/>
    <property type="match status" value="1"/>
</dbReference>
<gene>
    <name type="primary">pufC</name>
    <name type="ordered locus">Alvin_2551</name>
</gene>
<sequence length="383" mass="41479">MNLGKQLTLPAVAVVASVVLLGCERPPPEVVQKGYRGVAMEQNYNPRLLEASIKANLPVESLPAAAPGGPSVSDVYENVQVLKDLSVAEFTRTMVAVTTWVAPKEGCNYCHVPGNWASDDIYTKVVSRRMFELVRATNSNWKDHVAETGVTCYTCHRGNPVPKYVWVTDPGPNQPSGVTPTGQNYASSTVAYSALPLDPYTPFLDQSNEIRVIGQTALPAGNTTSLKQAEWTYGLMMQISDSLGVNCTFCHNSRSFYDWKQSTPQRTTAWYAIRHVRDINQNYIWPLNDALPASRKGPYGDPFKVGCMTCHQGAYKPLYGAQMAKDYPALYESAPAEAAPATEEAPAAEAEAVEAAPVEEAAPAPVEQAAAPVEDAAPAPQQL</sequence>
<proteinExistence type="evidence at protein level"/>
<feature type="signal peptide" evidence="3">
    <location>
        <begin position="1"/>
        <end position="22"/>
    </location>
</feature>
<feature type="chain" id="PRO_0000006549" description="Photosynthetic reaction center cytochrome c subunit">
    <location>
        <begin position="23"/>
        <end position="383"/>
    </location>
</feature>
<feature type="region of interest" description="Disordered" evidence="4">
    <location>
        <begin position="335"/>
        <end position="383"/>
    </location>
</feature>
<feature type="binding site" description="axial binding residue" evidence="2">
    <location>
        <position position="94"/>
    </location>
    <ligand>
        <name>heme</name>
        <dbReference type="ChEBI" id="CHEBI:30413"/>
        <label>1</label>
    </ligand>
    <ligandPart>
        <name>Fe</name>
        <dbReference type="ChEBI" id="CHEBI:18248"/>
    </ligandPart>
</feature>
<feature type="binding site" description="covalent" evidence="2">
    <location>
        <position position="107"/>
    </location>
    <ligand>
        <name>heme</name>
        <dbReference type="ChEBI" id="CHEBI:30413"/>
        <label>1</label>
    </ligand>
</feature>
<feature type="binding site" description="covalent" evidence="2">
    <location>
        <position position="110"/>
    </location>
    <ligand>
        <name>heme</name>
        <dbReference type="ChEBI" id="CHEBI:30413"/>
        <label>1</label>
    </ligand>
</feature>
<feature type="binding site" description="axial binding residue" evidence="2">
    <location>
        <position position="111"/>
    </location>
    <ligand>
        <name>heme</name>
        <dbReference type="ChEBI" id="CHEBI:30413"/>
        <label>1</label>
    </ligand>
    <ligandPart>
        <name>Fe</name>
        <dbReference type="ChEBI" id="CHEBI:18248"/>
    </ligandPart>
</feature>
<feature type="binding site" description="axial binding residue" evidence="2">
    <location>
        <position position="130"/>
    </location>
    <ligand>
        <name>heme</name>
        <dbReference type="ChEBI" id="CHEBI:30413"/>
        <label>2</label>
    </ligand>
    <ligandPart>
        <name>Fe</name>
        <dbReference type="ChEBI" id="CHEBI:18248"/>
    </ligandPart>
</feature>
<feature type="binding site" description="axial binding residue" evidence="2">
    <location>
        <position position="144"/>
    </location>
    <ligand>
        <name>heme</name>
        <dbReference type="ChEBI" id="CHEBI:30413"/>
        <label>4</label>
    </ligand>
    <ligandPart>
        <name>Fe</name>
        <dbReference type="ChEBI" id="CHEBI:18248"/>
    </ligandPart>
</feature>
<feature type="binding site" description="covalent" evidence="2">
    <location>
        <position position="152"/>
    </location>
    <ligand>
        <name>heme</name>
        <dbReference type="ChEBI" id="CHEBI:30413"/>
        <label>2</label>
    </ligand>
</feature>
<feature type="binding site" description="covalent" evidence="2">
    <location>
        <position position="155"/>
    </location>
    <ligand>
        <name>heme</name>
        <dbReference type="ChEBI" id="CHEBI:30413"/>
        <label>2</label>
    </ligand>
</feature>
<feature type="binding site" description="axial binding residue" evidence="2">
    <location>
        <position position="156"/>
    </location>
    <ligand>
        <name>heme</name>
        <dbReference type="ChEBI" id="CHEBI:30413"/>
        <label>2</label>
    </ligand>
    <ligandPart>
        <name>Fe</name>
        <dbReference type="ChEBI" id="CHEBI:18248"/>
    </ligandPart>
</feature>
<feature type="binding site" description="axial binding residue" evidence="2">
    <location>
        <position position="236"/>
    </location>
    <ligand>
        <name>heme</name>
        <dbReference type="ChEBI" id="CHEBI:30413"/>
        <label>3</label>
    </ligand>
    <ligandPart>
        <name>Fe</name>
        <dbReference type="ChEBI" id="CHEBI:18248"/>
    </ligandPart>
</feature>
<feature type="binding site" description="covalent" evidence="2">
    <location>
        <position position="247"/>
    </location>
    <ligand>
        <name>heme</name>
        <dbReference type="ChEBI" id="CHEBI:30413"/>
        <label>3</label>
    </ligand>
</feature>
<feature type="binding site" description="covalent" evidence="2">
    <location>
        <position position="250"/>
    </location>
    <ligand>
        <name>heme</name>
        <dbReference type="ChEBI" id="CHEBI:30413"/>
        <label>3</label>
    </ligand>
</feature>
<feature type="binding site" description="axial binding residue" evidence="2">
    <location>
        <position position="251"/>
    </location>
    <ligand>
        <name>heme</name>
        <dbReference type="ChEBI" id="CHEBI:30413"/>
        <label>3</label>
    </ligand>
    <ligandPart>
        <name>Fe</name>
        <dbReference type="ChEBI" id="CHEBI:18248"/>
    </ligandPart>
</feature>
<feature type="binding site" description="covalent" evidence="2">
    <location>
        <position position="307"/>
    </location>
    <ligand>
        <name>heme</name>
        <dbReference type="ChEBI" id="CHEBI:30413"/>
        <label>4</label>
    </ligand>
</feature>
<feature type="binding site" description="covalent" evidence="2">
    <location>
        <position position="310"/>
    </location>
    <ligand>
        <name>heme</name>
        <dbReference type="ChEBI" id="CHEBI:30413"/>
        <label>4</label>
    </ligand>
</feature>
<feature type="binding site" description="axial binding residue" evidence="2">
    <location>
        <position position="311"/>
    </location>
    <ligand>
        <name>heme</name>
        <dbReference type="ChEBI" id="CHEBI:30413"/>
        <label>4</label>
    </ligand>
    <ligandPart>
        <name>Fe</name>
        <dbReference type="ChEBI" id="CHEBI:18248"/>
    </ligandPart>
</feature>
<feature type="lipid moiety-binding region" description="N-palmitoyl cysteine" evidence="3">
    <location>
        <position position="23"/>
    </location>
</feature>
<feature type="lipid moiety-binding region" description="S-diacylglycerol cysteine" evidence="3">
    <location>
        <position position="23"/>
    </location>
</feature>
<feature type="sequence conflict" description="In Ref. 1; BAA32742." evidence="5" ref="1">
    <original>A</original>
    <variation>D</variation>
    <location>
        <position position="13"/>
    </location>
</feature>
<feature type="strand" evidence="6">
    <location>
        <begin position="29"/>
        <end position="32"/>
    </location>
</feature>
<feature type="strand" evidence="6">
    <location>
        <begin position="41"/>
        <end position="44"/>
    </location>
</feature>
<feature type="helix" evidence="6">
    <location>
        <begin position="46"/>
        <end position="54"/>
    </location>
</feature>
<feature type="strand" evidence="7">
    <location>
        <begin position="67"/>
        <end position="69"/>
    </location>
</feature>
<feature type="helix" evidence="6">
    <location>
        <begin position="72"/>
        <end position="75"/>
    </location>
</feature>
<feature type="strand" evidence="7">
    <location>
        <begin position="80"/>
        <end position="82"/>
    </location>
</feature>
<feature type="helix" evidence="6">
    <location>
        <begin position="87"/>
        <end position="101"/>
    </location>
</feature>
<feature type="turn" evidence="6">
    <location>
        <begin position="103"/>
        <end position="105"/>
    </location>
</feature>
<feature type="helix" evidence="6">
    <location>
        <begin position="107"/>
        <end position="109"/>
    </location>
</feature>
<feature type="strand" evidence="6">
    <location>
        <begin position="110"/>
        <end position="112"/>
    </location>
</feature>
<feature type="strand" evidence="6">
    <location>
        <begin position="115"/>
        <end position="117"/>
    </location>
</feature>
<feature type="helix" evidence="6">
    <location>
        <begin position="122"/>
        <end position="140"/>
    </location>
</feature>
<feature type="helix" evidence="6">
    <location>
        <begin position="142"/>
        <end position="145"/>
    </location>
</feature>
<feature type="turn" evidence="6">
    <location>
        <begin position="146"/>
        <end position="148"/>
    </location>
</feature>
<feature type="helix" evidence="6">
    <location>
        <begin position="152"/>
        <end position="156"/>
    </location>
</feature>
<feature type="helix" evidence="6">
    <location>
        <begin position="188"/>
        <end position="190"/>
    </location>
</feature>
<feature type="strand" evidence="6">
    <location>
        <begin position="193"/>
        <end position="195"/>
    </location>
</feature>
<feature type="helix" evidence="6">
    <location>
        <begin position="200"/>
        <end position="204"/>
    </location>
</feature>
<feature type="strand" evidence="6">
    <location>
        <begin position="215"/>
        <end position="218"/>
    </location>
</feature>
<feature type="helix" evidence="6">
    <location>
        <begin position="226"/>
        <end position="243"/>
    </location>
</feature>
<feature type="helix" evidence="6">
    <location>
        <begin position="247"/>
        <end position="249"/>
    </location>
</feature>
<feature type="helix" evidence="6">
    <location>
        <begin position="253"/>
        <end position="255"/>
    </location>
</feature>
<feature type="helix" evidence="6">
    <location>
        <begin position="264"/>
        <end position="282"/>
    </location>
</feature>
<feature type="helix" evidence="6">
    <location>
        <begin position="285"/>
        <end position="287"/>
    </location>
</feature>
<feature type="turn" evidence="6">
    <location>
        <begin position="288"/>
        <end position="290"/>
    </location>
</feature>
<feature type="helix" evidence="6">
    <location>
        <begin position="293"/>
        <end position="295"/>
    </location>
</feature>
<feature type="turn" evidence="6">
    <location>
        <begin position="307"/>
        <end position="309"/>
    </location>
</feature>
<feature type="strand" evidence="6">
    <location>
        <begin position="314"/>
        <end position="316"/>
    </location>
</feature>
<feature type="helix" evidence="6">
    <location>
        <begin position="317"/>
        <end position="320"/>
    </location>
</feature>
<feature type="helix" evidence="6">
    <location>
        <begin position="324"/>
        <end position="326"/>
    </location>
</feature>
<feature type="helix" evidence="6">
    <location>
        <begin position="328"/>
        <end position="330"/>
    </location>
</feature>
<name>CYCR_ALLVD</name>